<name>FBX44_HUMAN</name>
<keyword id="KW-0002">3D-structure</keyword>
<keyword id="KW-0025">Alternative splicing</keyword>
<keyword id="KW-1267">Proteomics identification</keyword>
<keyword id="KW-1185">Reference proteome</keyword>
<keyword id="KW-0833">Ubl conjugation pathway</keyword>
<dbReference type="EMBL" id="AY007380">
    <property type="protein sequence ID" value="AAG09623.1"/>
    <property type="molecule type" value="mRNA"/>
</dbReference>
<dbReference type="EMBL" id="AY040878">
    <property type="protein sequence ID" value="AAK77940.1"/>
    <property type="molecule type" value="mRNA"/>
</dbReference>
<dbReference type="EMBL" id="AK301418">
    <property type="protein sequence ID" value="BAH13479.1"/>
    <property type="molecule type" value="mRNA"/>
</dbReference>
<dbReference type="EMBL" id="AK055344">
    <property type="protein sequence ID" value="BAG51504.1"/>
    <property type="molecule type" value="mRNA"/>
</dbReference>
<dbReference type="EMBL" id="CR749368">
    <property type="protein sequence ID" value="CAH18221.1"/>
    <property type="molecule type" value="mRNA"/>
</dbReference>
<dbReference type="EMBL" id="AL031731">
    <property type="status" value="NOT_ANNOTATED_CDS"/>
    <property type="molecule type" value="Genomic_DNA"/>
</dbReference>
<dbReference type="EMBL" id="CH471130">
    <property type="protein sequence ID" value="EAW71690.1"/>
    <property type="molecule type" value="Genomic_DNA"/>
</dbReference>
<dbReference type="EMBL" id="CH471130">
    <property type="protein sequence ID" value="EAW71691.1"/>
    <property type="molecule type" value="Genomic_DNA"/>
</dbReference>
<dbReference type="EMBL" id="BC007832">
    <property type="protein sequence ID" value="AAH07832.1"/>
    <property type="molecule type" value="mRNA"/>
</dbReference>
<dbReference type="CCDS" id="CCDS131.1">
    <molecule id="Q9H4M3-2"/>
</dbReference>
<dbReference type="CCDS" id="CCDS132.1">
    <molecule id="Q9H4M3-1"/>
</dbReference>
<dbReference type="RefSeq" id="NP_001014765.1">
    <molecule id="Q9H4M3-1"/>
    <property type="nucleotide sequence ID" value="NM_001014765.2"/>
</dbReference>
<dbReference type="RefSeq" id="NP_001291719.1">
    <molecule id="Q9H4M3-2"/>
    <property type="nucleotide sequence ID" value="NM_001304790.2"/>
</dbReference>
<dbReference type="RefSeq" id="NP_001291720.1">
    <molecule id="Q9H4M3-1"/>
    <property type="nucleotide sequence ID" value="NM_001304791.2"/>
</dbReference>
<dbReference type="RefSeq" id="NP_149438.2">
    <molecule id="Q9H4M3-1"/>
    <property type="nucleotide sequence ID" value="NM_033182.5"/>
</dbReference>
<dbReference type="RefSeq" id="NP_904319.1">
    <molecule id="Q9H4M3-2"/>
    <property type="nucleotide sequence ID" value="NM_183412.3"/>
</dbReference>
<dbReference type="RefSeq" id="NP_904320.1">
    <molecule id="Q9H4M3-2"/>
    <property type="nucleotide sequence ID" value="NM_183413.3"/>
</dbReference>
<dbReference type="RefSeq" id="XP_006711108.1">
    <molecule id="Q9H4M3-1"/>
    <property type="nucleotide sequence ID" value="XM_006711045.4"/>
</dbReference>
<dbReference type="RefSeq" id="XP_016858332.1">
    <molecule id="Q9H4M3-1"/>
    <property type="nucleotide sequence ID" value="XM_017002843.2"/>
</dbReference>
<dbReference type="RefSeq" id="XP_016858333.1">
    <molecule id="Q9H4M3-2"/>
    <property type="nucleotide sequence ID" value="XM_017002844.3"/>
</dbReference>
<dbReference type="RefSeq" id="XP_047290591.1">
    <molecule id="Q9H4M3-1"/>
    <property type="nucleotide sequence ID" value="XM_047434635.1"/>
</dbReference>
<dbReference type="RefSeq" id="XP_047290593.1">
    <molecule id="Q9H4M3-1"/>
    <property type="nucleotide sequence ID" value="XM_047434637.1"/>
</dbReference>
<dbReference type="RefSeq" id="XP_047290603.1">
    <molecule id="Q9H4M3-1"/>
    <property type="nucleotide sequence ID" value="XM_047434647.1"/>
</dbReference>
<dbReference type="RefSeq" id="XP_047290608.1">
    <molecule id="Q9H4M3-1"/>
    <property type="nucleotide sequence ID" value="XM_047434652.1"/>
</dbReference>
<dbReference type="RefSeq" id="XP_047290615.1">
    <molecule id="Q9H4M3-2"/>
    <property type="nucleotide sequence ID" value="XM_047434659.1"/>
</dbReference>
<dbReference type="RefSeq" id="XP_047290616.1">
    <molecule id="Q9H4M3-2"/>
    <property type="nucleotide sequence ID" value="XM_047434660.1"/>
</dbReference>
<dbReference type="RefSeq" id="XP_054195639.1">
    <molecule id="Q9H4M3-1"/>
    <property type="nucleotide sequence ID" value="XM_054339664.1"/>
</dbReference>
<dbReference type="RefSeq" id="XP_054195640.1">
    <molecule id="Q9H4M3-1"/>
    <property type="nucleotide sequence ID" value="XM_054339665.1"/>
</dbReference>
<dbReference type="RefSeq" id="XP_054195641.1">
    <molecule id="Q9H4M3-1"/>
    <property type="nucleotide sequence ID" value="XM_054339666.1"/>
</dbReference>
<dbReference type="RefSeq" id="XP_054195642.1">
    <molecule id="Q9H4M3-1"/>
    <property type="nucleotide sequence ID" value="XM_054339667.1"/>
</dbReference>
<dbReference type="RefSeq" id="XP_054195643.1">
    <molecule id="Q9H4M3-1"/>
    <property type="nucleotide sequence ID" value="XM_054339668.1"/>
</dbReference>
<dbReference type="RefSeq" id="XP_054195644.1">
    <molecule id="Q9H4M3-1"/>
    <property type="nucleotide sequence ID" value="XM_054339669.1"/>
</dbReference>
<dbReference type="RefSeq" id="XP_054195645.1">
    <molecule id="Q9H4M3-2"/>
    <property type="nucleotide sequence ID" value="XM_054339670.1"/>
</dbReference>
<dbReference type="RefSeq" id="XP_054195646.1">
    <molecule id="Q9H4M3-2"/>
    <property type="nucleotide sequence ID" value="XM_054339671.1"/>
</dbReference>
<dbReference type="RefSeq" id="XP_054195647.1">
    <molecule id="Q9H4M3-2"/>
    <property type="nucleotide sequence ID" value="XM_054339672.1"/>
</dbReference>
<dbReference type="PDB" id="3WSO">
    <property type="method" value="X-ray"/>
    <property type="resolution" value="2.60 A"/>
    <property type="chains" value="A=1-255"/>
</dbReference>
<dbReference type="PDB" id="5B4N">
    <property type="method" value="X-ray"/>
    <property type="resolution" value="2.30 A"/>
    <property type="chains" value="A/B=94-191, A/B=194-247"/>
</dbReference>
<dbReference type="PDBsum" id="3WSO"/>
<dbReference type="PDBsum" id="5B4N"/>
<dbReference type="SMR" id="Q9H4M3"/>
<dbReference type="BioGRID" id="125038">
    <property type="interactions" value="39"/>
</dbReference>
<dbReference type="ComplexPortal" id="CPX-8003">
    <property type="entry name" value="SCF E3 ubiquitin ligase complex, FBXO44 variant"/>
</dbReference>
<dbReference type="CORUM" id="Q9H4M3"/>
<dbReference type="FunCoup" id="Q9H4M3">
    <property type="interactions" value="123"/>
</dbReference>
<dbReference type="IntAct" id="Q9H4M3">
    <property type="interactions" value="24"/>
</dbReference>
<dbReference type="iPTMnet" id="Q9H4M3"/>
<dbReference type="BioMuta" id="FBXO44"/>
<dbReference type="DMDM" id="61252661"/>
<dbReference type="jPOST" id="Q9H4M3"/>
<dbReference type="MassIVE" id="Q9H4M3"/>
<dbReference type="PaxDb" id="9606-ENSP00000365961"/>
<dbReference type="PeptideAtlas" id="Q9H4M3"/>
<dbReference type="ProteomicsDB" id="80863">
    <molecule id="Q9H4M3-1"/>
</dbReference>
<dbReference type="ProteomicsDB" id="80864">
    <molecule id="Q9H4M3-2"/>
</dbReference>
<dbReference type="Pumba" id="Q9H4M3"/>
<dbReference type="Antibodypedia" id="1239">
    <property type="antibodies" value="221 antibodies from 27 providers"/>
</dbReference>
<dbReference type="DNASU" id="93611"/>
<dbReference type="Ensembl" id="ENST00000251546.8">
    <molecule id="Q9H4M3-2"/>
    <property type="protein sequence ID" value="ENSP00000251546.4"/>
    <property type="gene ID" value="ENSG00000132879.14"/>
</dbReference>
<dbReference type="Ensembl" id="ENST00000251547.10">
    <molecule id="Q9H4M3-1"/>
    <property type="protein sequence ID" value="ENSP00000251547.5"/>
    <property type="gene ID" value="ENSG00000132879.14"/>
</dbReference>
<dbReference type="Ensembl" id="ENST00000376760.5">
    <molecule id="Q9H4M3-2"/>
    <property type="protein sequence ID" value="ENSP00000365951.1"/>
    <property type="gene ID" value="ENSG00000132879.14"/>
</dbReference>
<dbReference type="Ensembl" id="ENST00000376762.8">
    <molecule id="Q9H4M3-2"/>
    <property type="protein sequence ID" value="ENSP00000365953.4"/>
    <property type="gene ID" value="ENSG00000132879.14"/>
</dbReference>
<dbReference type="Ensembl" id="ENST00000376770.5">
    <molecule id="Q9H4M3-1"/>
    <property type="protein sequence ID" value="ENSP00000365961.1"/>
    <property type="gene ID" value="ENSG00000132879.14"/>
</dbReference>
<dbReference type="GeneID" id="93611"/>
<dbReference type="KEGG" id="hsa:93611"/>
<dbReference type="MANE-Select" id="ENST00000251547.10">
    <property type="protein sequence ID" value="ENSP00000251547.5"/>
    <property type="RefSeq nucleotide sequence ID" value="NM_033182.7"/>
    <property type="RefSeq protein sequence ID" value="NP_149438.2"/>
</dbReference>
<dbReference type="UCSC" id="uc001ask.4">
    <molecule id="Q9H4M3-1"/>
    <property type="organism name" value="human"/>
</dbReference>
<dbReference type="AGR" id="HGNC:24847"/>
<dbReference type="CTD" id="93611"/>
<dbReference type="DisGeNET" id="93611"/>
<dbReference type="GeneCards" id="FBXO44"/>
<dbReference type="HGNC" id="HGNC:24847">
    <property type="gene designation" value="FBXO44"/>
</dbReference>
<dbReference type="HPA" id="ENSG00000132879">
    <property type="expression patterns" value="Tissue enhanced (brain)"/>
</dbReference>
<dbReference type="MIM" id="609111">
    <property type="type" value="gene"/>
</dbReference>
<dbReference type="neXtProt" id="NX_Q9H4M3"/>
<dbReference type="OpenTargets" id="ENSG00000132879"/>
<dbReference type="PharmGKB" id="PA134863106"/>
<dbReference type="VEuPathDB" id="HostDB:ENSG00000132879"/>
<dbReference type="eggNOG" id="ENOG502RZA6">
    <property type="taxonomic scope" value="Eukaryota"/>
</dbReference>
<dbReference type="GeneTree" id="ENSGT00940000159408"/>
<dbReference type="HOGENOM" id="CLU_068548_0_0_1"/>
<dbReference type="InParanoid" id="Q9H4M3"/>
<dbReference type="OMA" id="NTRPDIE"/>
<dbReference type="OrthoDB" id="1107553at2759"/>
<dbReference type="PAN-GO" id="Q9H4M3">
    <property type="GO annotations" value="6 GO annotations based on evolutionary models"/>
</dbReference>
<dbReference type="PhylomeDB" id="Q9H4M3"/>
<dbReference type="TreeFam" id="TF320527"/>
<dbReference type="PathwayCommons" id="Q9H4M3"/>
<dbReference type="Reactome" id="R-HSA-8951664">
    <property type="pathway name" value="Neddylation"/>
</dbReference>
<dbReference type="Reactome" id="R-HSA-983168">
    <property type="pathway name" value="Antigen processing: Ubiquitination &amp; Proteasome degradation"/>
</dbReference>
<dbReference type="SignaLink" id="Q9H4M3"/>
<dbReference type="SIGNOR" id="Q9H4M3"/>
<dbReference type="BioGRID-ORCS" id="93611">
    <property type="hits" value="10 hits in 1188 CRISPR screens"/>
</dbReference>
<dbReference type="ChiTaRS" id="FBXO44">
    <property type="organism name" value="human"/>
</dbReference>
<dbReference type="EvolutionaryTrace" id="Q9H4M3"/>
<dbReference type="GenomeRNAi" id="93611"/>
<dbReference type="Pharos" id="Q9H4M3">
    <property type="development level" value="Tbio"/>
</dbReference>
<dbReference type="PRO" id="PR:Q9H4M3"/>
<dbReference type="Proteomes" id="UP000005640">
    <property type="component" value="Chromosome 1"/>
</dbReference>
<dbReference type="RNAct" id="Q9H4M3">
    <property type="molecule type" value="protein"/>
</dbReference>
<dbReference type="Bgee" id="ENSG00000132879">
    <property type="expression patterns" value="Expressed in right hemisphere of cerebellum and 162 other cell types or tissues"/>
</dbReference>
<dbReference type="ExpressionAtlas" id="Q9H4M3">
    <property type="expression patterns" value="baseline and differential"/>
</dbReference>
<dbReference type="GO" id="GO:0005737">
    <property type="term" value="C:cytoplasm"/>
    <property type="evidence" value="ECO:0000318"/>
    <property type="project" value="GO_Central"/>
</dbReference>
<dbReference type="GO" id="GO:0005829">
    <property type="term" value="C:cytosol"/>
    <property type="evidence" value="ECO:0000304"/>
    <property type="project" value="Reactome"/>
</dbReference>
<dbReference type="GO" id="GO:0019005">
    <property type="term" value="C:SCF ubiquitin ligase complex"/>
    <property type="evidence" value="ECO:0000314"/>
    <property type="project" value="UniProtKB"/>
</dbReference>
<dbReference type="GO" id="GO:0036503">
    <property type="term" value="P:ERAD pathway"/>
    <property type="evidence" value="ECO:0000318"/>
    <property type="project" value="GO_Central"/>
</dbReference>
<dbReference type="GO" id="GO:0006516">
    <property type="term" value="P:glycoprotein catabolic process"/>
    <property type="evidence" value="ECO:0000318"/>
    <property type="project" value="GO_Central"/>
</dbReference>
<dbReference type="GO" id="GO:0010498">
    <property type="term" value="P:proteasomal protein catabolic process"/>
    <property type="evidence" value="ECO:0000314"/>
    <property type="project" value="MGI"/>
</dbReference>
<dbReference type="GO" id="GO:0031146">
    <property type="term" value="P:SCF-dependent proteasomal ubiquitin-dependent protein catabolic process"/>
    <property type="evidence" value="ECO:0000318"/>
    <property type="project" value="GO_Central"/>
</dbReference>
<dbReference type="CDD" id="cd22168">
    <property type="entry name" value="F-box_FBXO6-like"/>
    <property type="match status" value="1"/>
</dbReference>
<dbReference type="FunFam" id="2.60.120.260:FF:000012">
    <property type="entry name" value="F-box only protein 2"/>
    <property type="match status" value="1"/>
</dbReference>
<dbReference type="FunFam" id="1.20.1280.50:FF:000002">
    <property type="entry name" value="F-box only protein 44"/>
    <property type="match status" value="1"/>
</dbReference>
<dbReference type="Gene3D" id="1.20.1280.50">
    <property type="match status" value="1"/>
</dbReference>
<dbReference type="Gene3D" id="2.60.120.260">
    <property type="entry name" value="Galactose-binding domain-like"/>
    <property type="match status" value="1"/>
</dbReference>
<dbReference type="InterPro" id="IPR007397">
    <property type="entry name" value="F-box-assoc_dom"/>
</dbReference>
<dbReference type="InterPro" id="IPR036047">
    <property type="entry name" value="F-box-like_dom_sf"/>
</dbReference>
<dbReference type="InterPro" id="IPR001810">
    <property type="entry name" value="F-box_dom"/>
</dbReference>
<dbReference type="InterPro" id="IPR039752">
    <property type="entry name" value="F-box_only"/>
</dbReference>
<dbReference type="InterPro" id="IPR008979">
    <property type="entry name" value="Galactose-bd-like_sf"/>
</dbReference>
<dbReference type="PANTHER" id="PTHR12125:SF13">
    <property type="entry name" value="F-BOX ONLY PROTEIN 44"/>
    <property type="match status" value="1"/>
</dbReference>
<dbReference type="PANTHER" id="PTHR12125">
    <property type="entry name" value="F-BOX ONLY PROTEIN 6-LIKE PROTEIN"/>
    <property type="match status" value="1"/>
</dbReference>
<dbReference type="Pfam" id="PF12937">
    <property type="entry name" value="F-box-like"/>
    <property type="match status" value="1"/>
</dbReference>
<dbReference type="Pfam" id="PF04300">
    <property type="entry name" value="FBA"/>
    <property type="match status" value="1"/>
</dbReference>
<dbReference type="SMART" id="SM01198">
    <property type="entry name" value="FBA"/>
    <property type="match status" value="1"/>
</dbReference>
<dbReference type="SMART" id="SM00256">
    <property type="entry name" value="FBOX"/>
    <property type="match status" value="1"/>
</dbReference>
<dbReference type="SUPFAM" id="SSF81383">
    <property type="entry name" value="F-box domain"/>
    <property type="match status" value="1"/>
</dbReference>
<dbReference type="SUPFAM" id="SSF49785">
    <property type="entry name" value="Galactose-binding domain-like"/>
    <property type="match status" value="1"/>
</dbReference>
<dbReference type="PROSITE" id="PS51114">
    <property type="entry name" value="FBA"/>
    <property type="match status" value="1"/>
</dbReference>
<dbReference type="PROSITE" id="PS50181">
    <property type="entry name" value="FBOX"/>
    <property type="match status" value="1"/>
</dbReference>
<gene>
    <name type="primary">FBXO44</name>
    <name type="synonym">FBG3</name>
    <name type="synonym">FBX30</name>
    <name type="synonym">FBX44</name>
    <name type="synonym">FBX6A</name>
    <name type="synonym">FBXO6A</name>
</gene>
<sequence>MAVGNINELPENILLELFTHVPARQLLLNCRLVCSLWRDLIDLVTLWKRKCLREGFITEDWDQPVADWKIFYFLRSLHRNLLHNPCAEEGFEFWSLDVNGGDEWKVEDLSRDQRKEFPNDQVKKYFVTSYYTCLKSQVVDLKAEGYWEELMDTTRPDIEVKDWFAARPDCGSKYQLCVQLLSSAHAPLGTFQPDPATIQQKSDAKWREVSHTFSNYPPGVRYIWFQHGGVDTHYWAGWYGPRVTNSSITIGPPLP</sequence>
<proteinExistence type="evidence at protein level"/>
<organism>
    <name type="scientific">Homo sapiens</name>
    <name type="common">Human</name>
    <dbReference type="NCBI Taxonomy" id="9606"/>
    <lineage>
        <taxon>Eukaryota</taxon>
        <taxon>Metazoa</taxon>
        <taxon>Chordata</taxon>
        <taxon>Craniata</taxon>
        <taxon>Vertebrata</taxon>
        <taxon>Euteleostomi</taxon>
        <taxon>Mammalia</taxon>
        <taxon>Eutheria</taxon>
        <taxon>Euarchontoglires</taxon>
        <taxon>Primates</taxon>
        <taxon>Haplorrhini</taxon>
        <taxon>Catarrhini</taxon>
        <taxon>Hominidae</taxon>
        <taxon>Homo</taxon>
    </lineage>
</organism>
<accession>Q9H4M3</accession>
<accession>B3KNZ2</accession>
<accession>B7Z743</accession>
<accession>Q5TGX2</accession>
<accession>Q5TGX4</accession>
<accession>Q5TGX5</accession>
<accession>Q68DJ9</accession>
<accession>Q8WWY2</accession>
<reference key="1">
    <citation type="submission" date="2000-08" db="EMBL/GenBank/DDBJ databases">
        <title>Fbx30: a novel member of NFB42 class of Fbx genes.</title>
        <authorList>
            <person name="Paulson H.L."/>
            <person name="Koppenhafer S.L."/>
        </authorList>
    </citation>
    <scope>NUCLEOTIDE SEQUENCE [MRNA] (ISOFORM 2)</scope>
    <source>
        <tissue>Brain</tissue>
    </source>
</reference>
<reference key="2">
    <citation type="journal article" date="2002" name="Gene">
        <title>A new subfamily of structurally related human F-box proteins.</title>
        <authorList>
            <person name="Ilyin G.P."/>
            <person name="Serandour A.L."/>
            <person name="Pigeon C."/>
            <person name="Rialland M."/>
            <person name="Glaise D."/>
            <person name="Guguen-Guillouzo C."/>
        </authorList>
    </citation>
    <scope>NUCLEOTIDE SEQUENCE [MRNA] (ISOFORM 1)</scope>
    <scope>TISSUE SPECIFICITY</scope>
</reference>
<reference key="3">
    <citation type="journal article" date="2004" name="Nat. Genet.">
        <title>Complete sequencing and characterization of 21,243 full-length human cDNAs.</title>
        <authorList>
            <person name="Ota T."/>
            <person name="Suzuki Y."/>
            <person name="Nishikawa T."/>
            <person name="Otsuki T."/>
            <person name="Sugiyama T."/>
            <person name="Irie R."/>
            <person name="Wakamatsu A."/>
            <person name="Hayashi K."/>
            <person name="Sato H."/>
            <person name="Nagai K."/>
            <person name="Kimura K."/>
            <person name="Makita H."/>
            <person name="Sekine M."/>
            <person name="Obayashi M."/>
            <person name="Nishi T."/>
            <person name="Shibahara T."/>
            <person name="Tanaka T."/>
            <person name="Ishii S."/>
            <person name="Yamamoto J."/>
            <person name="Saito K."/>
            <person name="Kawai Y."/>
            <person name="Isono Y."/>
            <person name="Nakamura Y."/>
            <person name="Nagahari K."/>
            <person name="Murakami K."/>
            <person name="Yasuda T."/>
            <person name="Iwayanagi T."/>
            <person name="Wagatsuma M."/>
            <person name="Shiratori A."/>
            <person name="Sudo H."/>
            <person name="Hosoiri T."/>
            <person name="Kaku Y."/>
            <person name="Kodaira H."/>
            <person name="Kondo H."/>
            <person name="Sugawara M."/>
            <person name="Takahashi M."/>
            <person name="Kanda K."/>
            <person name="Yokoi T."/>
            <person name="Furuya T."/>
            <person name="Kikkawa E."/>
            <person name="Omura Y."/>
            <person name="Abe K."/>
            <person name="Kamihara K."/>
            <person name="Katsuta N."/>
            <person name="Sato K."/>
            <person name="Tanikawa M."/>
            <person name="Yamazaki M."/>
            <person name="Ninomiya K."/>
            <person name="Ishibashi T."/>
            <person name="Yamashita H."/>
            <person name="Murakawa K."/>
            <person name="Fujimori K."/>
            <person name="Tanai H."/>
            <person name="Kimata M."/>
            <person name="Watanabe M."/>
            <person name="Hiraoka S."/>
            <person name="Chiba Y."/>
            <person name="Ishida S."/>
            <person name="Ono Y."/>
            <person name="Takiguchi S."/>
            <person name="Watanabe S."/>
            <person name="Yosida M."/>
            <person name="Hotuta T."/>
            <person name="Kusano J."/>
            <person name="Kanehori K."/>
            <person name="Takahashi-Fujii A."/>
            <person name="Hara H."/>
            <person name="Tanase T.-O."/>
            <person name="Nomura Y."/>
            <person name="Togiya S."/>
            <person name="Komai F."/>
            <person name="Hara R."/>
            <person name="Takeuchi K."/>
            <person name="Arita M."/>
            <person name="Imose N."/>
            <person name="Musashino K."/>
            <person name="Yuuki H."/>
            <person name="Oshima A."/>
            <person name="Sasaki N."/>
            <person name="Aotsuka S."/>
            <person name="Yoshikawa Y."/>
            <person name="Matsunawa H."/>
            <person name="Ichihara T."/>
            <person name="Shiohata N."/>
            <person name="Sano S."/>
            <person name="Moriya S."/>
            <person name="Momiyama H."/>
            <person name="Satoh N."/>
            <person name="Takami S."/>
            <person name="Terashima Y."/>
            <person name="Suzuki O."/>
            <person name="Nakagawa S."/>
            <person name="Senoh A."/>
            <person name="Mizoguchi H."/>
            <person name="Goto Y."/>
            <person name="Shimizu F."/>
            <person name="Wakebe H."/>
            <person name="Hishigaki H."/>
            <person name="Watanabe T."/>
            <person name="Sugiyama A."/>
            <person name="Takemoto M."/>
            <person name="Kawakami B."/>
            <person name="Yamazaki M."/>
            <person name="Watanabe K."/>
            <person name="Kumagai A."/>
            <person name="Itakura S."/>
            <person name="Fukuzumi Y."/>
            <person name="Fujimori Y."/>
            <person name="Komiyama M."/>
            <person name="Tashiro H."/>
            <person name="Tanigami A."/>
            <person name="Fujiwara T."/>
            <person name="Ono T."/>
            <person name="Yamada K."/>
            <person name="Fujii Y."/>
            <person name="Ozaki K."/>
            <person name="Hirao M."/>
            <person name="Ohmori Y."/>
            <person name="Kawabata A."/>
            <person name="Hikiji T."/>
            <person name="Kobatake N."/>
            <person name="Inagaki H."/>
            <person name="Ikema Y."/>
            <person name="Okamoto S."/>
            <person name="Okitani R."/>
            <person name="Kawakami T."/>
            <person name="Noguchi S."/>
            <person name="Itoh T."/>
            <person name="Shigeta K."/>
            <person name="Senba T."/>
            <person name="Matsumura K."/>
            <person name="Nakajima Y."/>
            <person name="Mizuno T."/>
            <person name="Morinaga M."/>
            <person name="Sasaki M."/>
            <person name="Togashi T."/>
            <person name="Oyama M."/>
            <person name="Hata H."/>
            <person name="Watanabe M."/>
            <person name="Komatsu T."/>
            <person name="Mizushima-Sugano J."/>
            <person name="Satoh T."/>
            <person name="Shirai Y."/>
            <person name="Takahashi Y."/>
            <person name="Nakagawa K."/>
            <person name="Okumura K."/>
            <person name="Nagase T."/>
            <person name="Nomura N."/>
            <person name="Kikuchi H."/>
            <person name="Masuho Y."/>
            <person name="Yamashita R."/>
            <person name="Nakai K."/>
            <person name="Yada T."/>
            <person name="Nakamura Y."/>
            <person name="Ohara O."/>
            <person name="Isogai T."/>
            <person name="Sugano S."/>
        </authorList>
    </citation>
    <scope>NUCLEOTIDE SEQUENCE [LARGE SCALE MRNA] (ISOFORMS 1 AND 2)</scope>
    <source>
        <tissue>Brain</tissue>
        <tissue>Synovium</tissue>
    </source>
</reference>
<reference key="4">
    <citation type="journal article" date="2007" name="BMC Genomics">
        <title>The full-ORF clone resource of the German cDNA consortium.</title>
        <authorList>
            <person name="Bechtel S."/>
            <person name="Rosenfelder H."/>
            <person name="Duda A."/>
            <person name="Schmidt C.P."/>
            <person name="Ernst U."/>
            <person name="Wellenreuther R."/>
            <person name="Mehrle A."/>
            <person name="Schuster C."/>
            <person name="Bahr A."/>
            <person name="Bloecker H."/>
            <person name="Heubner D."/>
            <person name="Hoerlein A."/>
            <person name="Michel G."/>
            <person name="Wedler H."/>
            <person name="Koehrer K."/>
            <person name="Ottenwaelder B."/>
            <person name="Poustka A."/>
            <person name="Wiemann S."/>
            <person name="Schupp I."/>
        </authorList>
    </citation>
    <scope>NUCLEOTIDE SEQUENCE [LARGE SCALE MRNA] (ISOFORM 1)</scope>
    <source>
        <tissue>Retina</tissue>
    </source>
</reference>
<reference key="5">
    <citation type="journal article" date="2006" name="Nature">
        <title>The DNA sequence and biological annotation of human chromosome 1.</title>
        <authorList>
            <person name="Gregory S.G."/>
            <person name="Barlow K.F."/>
            <person name="McLay K.E."/>
            <person name="Kaul R."/>
            <person name="Swarbreck D."/>
            <person name="Dunham A."/>
            <person name="Scott C.E."/>
            <person name="Howe K.L."/>
            <person name="Woodfine K."/>
            <person name="Spencer C.C.A."/>
            <person name="Jones M.C."/>
            <person name="Gillson C."/>
            <person name="Searle S."/>
            <person name="Zhou Y."/>
            <person name="Kokocinski F."/>
            <person name="McDonald L."/>
            <person name="Evans R."/>
            <person name="Phillips K."/>
            <person name="Atkinson A."/>
            <person name="Cooper R."/>
            <person name="Jones C."/>
            <person name="Hall R.E."/>
            <person name="Andrews T.D."/>
            <person name="Lloyd C."/>
            <person name="Ainscough R."/>
            <person name="Almeida J.P."/>
            <person name="Ambrose K.D."/>
            <person name="Anderson F."/>
            <person name="Andrew R.W."/>
            <person name="Ashwell R.I.S."/>
            <person name="Aubin K."/>
            <person name="Babbage A.K."/>
            <person name="Bagguley C.L."/>
            <person name="Bailey J."/>
            <person name="Beasley H."/>
            <person name="Bethel G."/>
            <person name="Bird C.P."/>
            <person name="Bray-Allen S."/>
            <person name="Brown J.Y."/>
            <person name="Brown A.J."/>
            <person name="Buckley D."/>
            <person name="Burton J."/>
            <person name="Bye J."/>
            <person name="Carder C."/>
            <person name="Chapman J.C."/>
            <person name="Clark S.Y."/>
            <person name="Clarke G."/>
            <person name="Clee C."/>
            <person name="Cobley V."/>
            <person name="Collier R.E."/>
            <person name="Corby N."/>
            <person name="Coville G.J."/>
            <person name="Davies J."/>
            <person name="Deadman R."/>
            <person name="Dunn M."/>
            <person name="Earthrowl M."/>
            <person name="Ellington A.G."/>
            <person name="Errington H."/>
            <person name="Frankish A."/>
            <person name="Frankland J."/>
            <person name="French L."/>
            <person name="Garner P."/>
            <person name="Garnett J."/>
            <person name="Gay L."/>
            <person name="Ghori M.R.J."/>
            <person name="Gibson R."/>
            <person name="Gilby L.M."/>
            <person name="Gillett W."/>
            <person name="Glithero R.J."/>
            <person name="Grafham D.V."/>
            <person name="Griffiths C."/>
            <person name="Griffiths-Jones S."/>
            <person name="Grocock R."/>
            <person name="Hammond S."/>
            <person name="Harrison E.S.I."/>
            <person name="Hart E."/>
            <person name="Haugen E."/>
            <person name="Heath P.D."/>
            <person name="Holmes S."/>
            <person name="Holt K."/>
            <person name="Howden P.J."/>
            <person name="Hunt A.R."/>
            <person name="Hunt S.E."/>
            <person name="Hunter G."/>
            <person name="Isherwood J."/>
            <person name="James R."/>
            <person name="Johnson C."/>
            <person name="Johnson D."/>
            <person name="Joy A."/>
            <person name="Kay M."/>
            <person name="Kershaw J.K."/>
            <person name="Kibukawa M."/>
            <person name="Kimberley A.M."/>
            <person name="King A."/>
            <person name="Knights A.J."/>
            <person name="Lad H."/>
            <person name="Laird G."/>
            <person name="Lawlor S."/>
            <person name="Leongamornlert D.A."/>
            <person name="Lloyd D.M."/>
            <person name="Loveland J."/>
            <person name="Lovell J."/>
            <person name="Lush M.J."/>
            <person name="Lyne R."/>
            <person name="Martin S."/>
            <person name="Mashreghi-Mohammadi M."/>
            <person name="Matthews L."/>
            <person name="Matthews N.S.W."/>
            <person name="McLaren S."/>
            <person name="Milne S."/>
            <person name="Mistry S."/>
            <person name="Moore M.J.F."/>
            <person name="Nickerson T."/>
            <person name="O'Dell C.N."/>
            <person name="Oliver K."/>
            <person name="Palmeiri A."/>
            <person name="Palmer S.A."/>
            <person name="Parker A."/>
            <person name="Patel D."/>
            <person name="Pearce A.V."/>
            <person name="Peck A.I."/>
            <person name="Pelan S."/>
            <person name="Phelps K."/>
            <person name="Phillimore B.J."/>
            <person name="Plumb R."/>
            <person name="Rajan J."/>
            <person name="Raymond C."/>
            <person name="Rouse G."/>
            <person name="Saenphimmachak C."/>
            <person name="Sehra H.K."/>
            <person name="Sheridan E."/>
            <person name="Shownkeen R."/>
            <person name="Sims S."/>
            <person name="Skuce C.D."/>
            <person name="Smith M."/>
            <person name="Steward C."/>
            <person name="Subramanian S."/>
            <person name="Sycamore N."/>
            <person name="Tracey A."/>
            <person name="Tromans A."/>
            <person name="Van Helmond Z."/>
            <person name="Wall M."/>
            <person name="Wallis J.M."/>
            <person name="White S."/>
            <person name="Whitehead S.L."/>
            <person name="Wilkinson J.E."/>
            <person name="Willey D.L."/>
            <person name="Williams H."/>
            <person name="Wilming L."/>
            <person name="Wray P.W."/>
            <person name="Wu Z."/>
            <person name="Coulson A."/>
            <person name="Vaudin M."/>
            <person name="Sulston J.E."/>
            <person name="Durbin R.M."/>
            <person name="Hubbard T."/>
            <person name="Wooster R."/>
            <person name="Dunham I."/>
            <person name="Carter N.P."/>
            <person name="McVean G."/>
            <person name="Ross M.T."/>
            <person name="Harrow J."/>
            <person name="Olson M.V."/>
            <person name="Beck S."/>
            <person name="Rogers J."/>
            <person name="Bentley D.R."/>
        </authorList>
    </citation>
    <scope>NUCLEOTIDE SEQUENCE [LARGE SCALE GENOMIC DNA]</scope>
</reference>
<reference key="6">
    <citation type="submission" date="2005-07" db="EMBL/GenBank/DDBJ databases">
        <authorList>
            <person name="Mural R.J."/>
            <person name="Istrail S."/>
            <person name="Sutton G.G."/>
            <person name="Florea L."/>
            <person name="Halpern A.L."/>
            <person name="Mobarry C.M."/>
            <person name="Lippert R."/>
            <person name="Walenz B."/>
            <person name="Shatkay H."/>
            <person name="Dew I."/>
            <person name="Miller J.R."/>
            <person name="Flanigan M.J."/>
            <person name="Edwards N.J."/>
            <person name="Bolanos R."/>
            <person name="Fasulo D."/>
            <person name="Halldorsson B.V."/>
            <person name="Hannenhalli S."/>
            <person name="Turner R."/>
            <person name="Yooseph S."/>
            <person name="Lu F."/>
            <person name="Nusskern D.R."/>
            <person name="Shue B.C."/>
            <person name="Zheng X.H."/>
            <person name="Zhong F."/>
            <person name="Delcher A.L."/>
            <person name="Huson D.H."/>
            <person name="Kravitz S.A."/>
            <person name="Mouchard L."/>
            <person name="Reinert K."/>
            <person name="Remington K.A."/>
            <person name="Clark A.G."/>
            <person name="Waterman M.S."/>
            <person name="Eichler E.E."/>
            <person name="Adams M.D."/>
            <person name="Hunkapiller M.W."/>
            <person name="Myers E.W."/>
            <person name="Venter J.C."/>
        </authorList>
    </citation>
    <scope>NUCLEOTIDE SEQUENCE [LARGE SCALE GENOMIC DNA]</scope>
</reference>
<reference key="7">
    <citation type="journal article" date="2004" name="Genome Res.">
        <title>The status, quality, and expansion of the NIH full-length cDNA project: the Mammalian Gene Collection (MGC).</title>
        <authorList>
            <consortium name="The MGC Project Team"/>
        </authorList>
    </citation>
    <scope>NUCLEOTIDE SEQUENCE [LARGE SCALE MRNA] (ISOFORM 2)</scope>
    <source>
        <tissue>B-cell</tissue>
    </source>
</reference>
<reference key="8">
    <citation type="journal article" date="2008" name="J. Biol. Chem.">
        <title>Diversity in tissue expression, substrate binding, and SCF complex formation for a lectin family of ubiquitin ligases.</title>
        <authorList>
            <person name="Glenn K.A."/>
            <person name="Nelson R.F."/>
            <person name="Wen H.M."/>
            <person name="Mallinger A.J."/>
            <person name="Paulson H.L."/>
        </authorList>
    </citation>
    <scope>LACK OF SUGAR-BINDING</scope>
    <scope>INTERACTION WITH CUL1 AND SKP1</scope>
    <scope>IDENTIFICATION IN SCF-COMPLEX</scope>
</reference>
<comment type="function">
    <text>Substrate-recognition component of the SCF (SKP1-CUL1-F-box protein)-type E3 ubiquitin ligase complex.</text>
</comment>
<comment type="subunit">
    <text evidence="4">Part of a SCF (SKP1-cullin-F-box) protein ligase complex. Interacts with SKP1 and CUL1.</text>
</comment>
<comment type="interaction">
    <interactant intactId="EBI-2322644">
        <id>Q9H4M3</id>
    </interactant>
    <interactant intactId="EBI-10193358">
        <id>Q96GS4</id>
        <label>BORCS6</label>
    </interactant>
    <organismsDiffer>false</organismsDiffer>
    <experiments>4</experiments>
</comment>
<comment type="interaction">
    <interactant intactId="EBI-2322644">
        <id>Q9H4M3</id>
    </interactant>
    <interactant intactId="EBI-748621">
        <id>Q9UJW9</id>
        <label>SERTAD3</label>
    </interactant>
    <organismsDiffer>false</organismsDiffer>
    <experiments>3</experiments>
</comment>
<comment type="interaction">
    <interactant intactId="EBI-2322644">
        <id>Q9H4M3</id>
    </interactant>
    <interactant intactId="EBI-307486">
        <id>P63208</id>
        <label>SKP1</label>
    </interactant>
    <organismsDiffer>false</organismsDiffer>
    <experiments>8</experiments>
</comment>
<comment type="interaction">
    <interactant intactId="EBI-12104696">
        <id>Q9H4M3-2</id>
    </interactant>
    <interactant intactId="EBI-348630">
        <id>P78537</id>
        <label>BLOC1S1</label>
    </interactant>
    <organismsDiffer>false</organismsDiffer>
    <experiments>3</experiments>
</comment>
<comment type="interaction">
    <interactant intactId="EBI-12104696">
        <id>Q9H4M3-2</id>
    </interactant>
    <interactant intactId="EBI-10193358">
        <id>Q96GS4</id>
        <label>BORCS6</label>
    </interactant>
    <organismsDiffer>false</organismsDiffer>
    <experiments>8</experiments>
</comment>
<comment type="interaction">
    <interactant intactId="EBI-12104696">
        <id>Q9H4M3-2</id>
    </interactant>
    <interactant intactId="EBI-7116203">
        <id>O75031</id>
        <label>HSF2BP</label>
    </interactant>
    <organismsDiffer>false</organismsDiffer>
    <experiments>3</experiments>
</comment>
<comment type="interaction">
    <interactant intactId="EBI-12104696">
        <id>Q9H4M3-2</id>
    </interactant>
    <interactant intactId="EBI-18398632">
        <id>Q9ULR0-1</id>
        <label>ISY1</label>
    </interactant>
    <organismsDiffer>false</organismsDiffer>
    <experiments>3</experiments>
</comment>
<comment type="interaction">
    <interactant intactId="EBI-12104696">
        <id>Q9H4M3-2</id>
    </interactant>
    <interactant intactId="EBI-12810853">
        <id>Q8TAV5</id>
        <label>KCNJ5-AS1</label>
    </interactant>
    <organismsDiffer>false</organismsDiffer>
    <experiments>3</experiments>
</comment>
<comment type="interaction">
    <interactant intactId="EBI-12104696">
        <id>Q9H4M3-2</id>
    </interactant>
    <interactant intactId="EBI-16439278">
        <id>Q6FHY5</id>
        <label>MEOX2</label>
    </interactant>
    <organismsDiffer>false</organismsDiffer>
    <experiments>3</experiments>
</comment>
<comment type="interaction">
    <interactant intactId="EBI-12104696">
        <id>Q9H4M3-2</id>
    </interactant>
    <interactant intactId="EBI-12859340">
        <id>Q9NQX1-2</id>
        <label>PRDM5</label>
    </interactant>
    <organismsDiffer>false</organismsDiffer>
    <experiments>3</experiments>
</comment>
<comment type="interaction">
    <interactant intactId="EBI-12104696">
        <id>Q9H4M3-2</id>
    </interactant>
    <interactant intactId="EBI-307486">
        <id>P63208</id>
        <label>SKP1</label>
    </interactant>
    <organismsDiffer>false</organismsDiffer>
    <experiments>6</experiments>
</comment>
<comment type="interaction">
    <interactant intactId="EBI-12104696">
        <id>Q9H4M3-2</id>
    </interactant>
    <interactant intactId="EBI-742688">
        <id>Q9NZD8</id>
        <label>SPG21</label>
    </interactant>
    <organismsDiffer>false</organismsDiffer>
    <experiments>3</experiments>
</comment>
<comment type="alternative products">
    <event type="alternative splicing"/>
    <isoform>
        <id>Q9H4M3-1</id>
        <name>1</name>
        <sequence type="displayed"/>
    </isoform>
    <isoform>
        <id>Q9H4M3-2</id>
        <name>2</name>
        <sequence type="described" ref="VSP_011346 VSP_011347"/>
    </isoform>
</comment>
<comment type="tissue specificity">
    <text evidence="3">Abundantly expressed in brain and kidney. Expressed at lower levels in heart, spleen and liver.</text>
</comment>
<comment type="miscellaneous">
    <text>In contrast to other FBA domain containing proteins, FBXO44 demonstrates no significant binding to any of the 200 glycans tested.</text>
</comment>
<comment type="online information" name="Functional Glycomics Gateway - Glycan Binding">
    <link uri="http://www.functionalglycomics.org/glycomics/GBPServlet?&amp;operationType=view&amp;cbpId=cbp_hum_Fusion_411"/>
    <text>FLAG-FBG3</text>
</comment>
<protein>
    <recommendedName>
        <fullName>F-box only protein 44</fullName>
    </recommendedName>
    <alternativeName>
        <fullName>F-box protein FBX30</fullName>
    </alternativeName>
    <alternativeName>
        <fullName>F-box/G-domain protein 3</fullName>
    </alternativeName>
</protein>
<feature type="chain" id="PRO_0000119945" description="F-box only protein 44">
    <location>
        <begin position="1"/>
        <end position="255"/>
    </location>
</feature>
<feature type="domain" description="F-box" evidence="1">
    <location>
        <begin position="3"/>
        <end position="50"/>
    </location>
</feature>
<feature type="domain" description="FBA" evidence="2">
    <location>
        <begin position="71"/>
        <end position="252"/>
    </location>
</feature>
<feature type="splice variant" id="VSP_011346" description="In isoform 2." evidence="5 6 7">
    <original>KKYFVTSYYTCLKSQVVDLKAEGYWEELMDTTRPDIEVKDWFAARPDCGSKYQLCVQLLSSAHAPLGTFQPDPATIQQKSDAKWREVSHTFSNYPPGVRYIW</original>
    <variation>RSQARLRVQVPAVRSAPVVRARASGDLPARPGDHPAEERCQVEGGLPHILQLPARRPLHLVSARRRGHSLLGRLVRPEGHQQQHHHRAPAALTPPEPPSAEP</variation>
    <location>
        <begin position="123"/>
        <end position="224"/>
    </location>
</feature>
<feature type="splice variant" id="VSP_011347" description="In isoform 2." evidence="5 6 7">
    <location>
        <begin position="225"/>
        <end position="255"/>
    </location>
</feature>
<feature type="sequence conflict" description="In Ref. 4; CAH18221." evidence="8" ref="4">
    <original>G</original>
    <variation>D</variation>
    <location>
        <position position="101"/>
    </location>
</feature>
<feature type="sequence conflict" description="In Ref. 2; AAK77940." evidence="8" ref="2">
    <original>G</original>
    <variation>R</variation>
    <location>
        <position position="251"/>
    </location>
</feature>
<feature type="helix" evidence="9">
    <location>
        <begin position="6"/>
        <end position="8"/>
    </location>
</feature>
<feature type="helix" evidence="9">
    <location>
        <begin position="11"/>
        <end position="19"/>
    </location>
</feature>
<feature type="helix" evidence="9">
    <location>
        <begin position="23"/>
        <end position="28"/>
    </location>
</feature>
<feature type="helix" evidence="9">
    <location>
        <begin position="30"/>
        <end position="32"/>
    </location>
</feature>
<feature type="helix" evidence="9">
    <location>
        <begin position="35"/>
        <end position="41"/>
    </location>
</feature>
<feature type="helix" evidence="9">
    <location>
        <begin position="44"/>
        <end position="53"/>
    </location>
</feature>
<feature type="helix" evidence="9">
    <location>
        <begin position="68"/>
        <end position="77"/>
    </location>
</feature>
<feature type="strand" evidence="9">
    <location>
        <begin position="82"/>
        <end position="84"/>
    </location>
</feature>
<feature type="turn" evidence="9">
    <location>
        <begin position="88"/>
        <end position="93"/>
    </location>
</feature>
<feature type="strand" evidence="9">
    <location>
        <begin position="95"/>
        <end position="99"/>
    </location>
</feature>
<feature type="helix" evidence="10">
    <location>
        <begin position="100"/>
        <end position="102"/>
    </location>
</feature>
<feature type="strand" evidence="10">
    <location>
        <begin position="105"/>
        <end position="107"/>
    </location>
</feature>
<feature type="helix" evidence="10">
    <location>
        <begin position="111"/>
        <end position="114"/>
    </location>
</feature>
<feature type="strand" evidence="10">
    <location>
        <begin position="117"/>
        <end position="120"/>
    </location>
</feature>
<feature type="strand" evidence="10">
    <location>
        <begin position="124"/>
        <end position="130"/>
    </location>
</feature>
<feature type="strand" evidence="9">
    <location>
        <begin position="133"/>
        <end position="140"/>
    </location>
</feature>
<feature type="helix" evidence="9">
    <location>
        <begin position="142"/>
        <end position="144"/>
    </location>
</feature>
<feature type="helix" evidence="9">
    <location>
        <begin position="148"/>
        <end position="154"/>
    </location>
</feature>
<feature type="strand" evidence="9">
    <location>
        <begin position="157"/>
        <end position="165"/>
    </location>
</feature>
<feature type="strand" evidence="10">
    <location>
        <begin position="172"/>
        <end position="176"/>
    </location>
</feature>
<feature type="strand" evidence="9">
    <location>
        <begin position="187"/>
        <end position="191"/>
    </location>
</feature>
<feature type="strand" evidence="10">
    <location>
        <begin position="196"/>
        <end position="198"/>
    </location>
</feature>
<feature type="strand" evidence="9">
    <location>
        <begin position="203"/>
        <end position="205"/>
    </location>
</feature>
<feature type="strand" evidence="9">
    <location>
        <begin position="207"/>
        <end position="213"/>
    </location>
</feature>
<feature type="strand" evidence="9">
    <location>
        <begin position="222"/>
        <end position="231"/>
    </location>
</feature>
<feature type="strand" evidence="10">
    <location>
        <begin position="242"/>
        <end position="247"/>
    </location>
</feature>
<evidence type="ECO:0000255" key="1">
    <source>
        <dbReference type="PROSITE-ProRule" id="PRU00080"/>
    </source>
</evidence>
<evidence type="ECO:0000255" key="2">
    <source>
        <dbReference type="PROSITE-ProRule" id="PRU00482"/>
    </source>
</evidence>
<evidence type="ECO:0000269" key="3">
    <source>
    </source>
</evidence>
<evidence type="ECO:0000269" key="4">
    <source>
    </source>
</evidence>
<evidence type="ECO:0000303" key="5">
    <source>
    </source>
</evidence>
<evidence type="ECO:0000303" key="6">
    <source>
    </source>
</evidence>
<evidence type="ECO:0000303" key="7">
    <source ref="1"/>
</evidence>
<evidence type="ECO:0000305" key="8"/>
<evidence type="ECO:0007829" key="9">
    <source>
        <dbReference type="PDB" id="3WSO"/>
    </source>
</evidence>
<evidence type="ECO:0007829" key="10">
    <source>
        <dbReference type="PDB" id="5B4N"/>
    </source>
</evidence>